<dbReference type="EMBL" id="CP001396">
    <property type="protein sequence ID" value="ACR65693.1"/>
    <property type="molecule type" value="Genomic_DNA"/>
</dbReference>
<dbReference type="RefSeq" id="WP_000162574.1">
    <property type="nucleotide sequence ID" value="NC_012759.1"/>
</dbReference>
<dbReference type="SMR" id="C4ZYN7"/>
<dbReference type="GeneID" id="93774470"/>
<dbReference type="KEGG" id="ebw:BWG_2378"/>
<dbReference type="HOGENOM" id="CLU_108953_3_0_6"/>
<dbReference type="GO" id="GO:0005829">
    <property type="term" value="C:cytosol"/>
    <property type="evidence" value="ECO:0007669"/>
    <property type="project" value="TreeGrafter"/>
</dbReference>
<dbReference type="GO" id="GO:0003723">
    <property type="term" value="F:RNA binding"/>
    <property type="evidence" value="ECO:0007669"/>
    <property type="project" value="UniProtKB-UniRule"/>
</dbReference>
<dbReference type="GO" id="GO:0070929">
    <property type="term" value="P:trans-translation"/>
    <property type="evidence" value="ECO:0007669"/>
    <property type="project" value="UniProtKB-UniRule"/>
</dbReference>
<dbReference type="CDD" id="cd09294">
    <property type="entry name" value="SmpB"/>
    <property type="match status" value="1"/>
</dbReference>
<dbReference type="FunFam" id="2.40.280.10:FF:000001">
    <property type="entry name" value="SsrA-binding protein"/>
    <property type="match status" value="1"/>
</dbReference>
<dbReference type="Gene3D" id="2.40.280.10">
    <property type="match status" value="1"/>
</dbReference>
<dbReference type="HAMAP" id="MF_00023">
    <property type="entry name" value="SmpB"/>
    <property type="match status" value="1"/>
</dbReference>
<dbReference type="InterPro" id="IPR023620">
    <property type="entry name" value="SmpB"/>
</dbReference>
<dbReference type="InterPro" id="IPR000037">
    <property type="entry name" value="SsrA-bd_prot"/>
</dbReference>
<dbReference type="InterPro" id="IPR020081">
    <property type="entry name" value="SsrA-bd_prot_CS"/>
</dbReference>
<dbReference type="NCBIfam" id="NF003843">
    <property type="entry name" value="PRK05422.1"/>
    <property type="match status" value="1"/>
</dbReference>
<dbReference type="NCBIfam" id="TIGR00086">
    <property type="entry name" value="smpB"/>
    <property type="match status" value="1"/>
</dbReference>
<dbReference type="PANTHER" id="PTHR30308:SF2">
    <property type="entry name" value="SSRA-BINDING PROTEIN"/>
    <property type="match status" value="1"/>
</dbReference>
<dbReference type="PANTHER" id="PTHR30308">
    <property type="entry name" value="TMRNA-BINDING COMPONENT OF TRANS-TRANSLATION TAGGING COMPLEX"/>
    <property type="match status" value="1"/>
</dbReference>
<dbReference type="Pfam" id="PF01668">
    <property type="entry name" value="SmpB"/>
    <property type="match status" value="1"/>
</dbReference>
<dbReference type="SUPFAM" id="SSF74982">
    <property type="entry name" value="Small protein B (SmpB)"/>
    <property type="match status" value="1"/>
</dbReference>
<dbReference type="PROSITE" id="PS01317">
    <property type="entry name" value="SSRP"/>
    <property type="match status" value="1"/>
</dbReference>
<keyword id="KW-0963">Cytoplasm</keyword>
<keyword id="KW-0694">RNA-binding</keyword>
<evidence type="ECO:0000255" key="1">
    <source>
        <dbReference type="HAMAP-Rule" id="MF_00023"/>
    </source>
</evidence>
<gene>
    <name evidence="1" type="primary">smpB</name>
    <name type="ordered locus">BWG_2378</name>
</gene>
<accession>C4ZYN7</accession>
<name>SSRP_ECOBW</name>
<protein>
    <recommendedName>
        <fullName evidence="1">SsrA-binding protein</fullName>
    </recommendedName>
    <alternativeName>
        <fullName evidence="1">Small protein B</fullName>
    </alternativeName>
</protein>
<comment type="function">
    <text evidence="1">Required for rescue of stalled ribosomes mediated by trans-translation. Binds to transfer-messenger RNA (tmRNA), required for stable association of tmRNA with ribosomes. tmRNA and SmpB together mimic tRNA shape, replacing the anticodon stem-loop with SmpB. tmRNA is encoded by the ssrA gene; the 2 termini fold to resemble tRNA(Ala) and it encodes a 'tag peptide', a short internal open reading frame. During trans-translation Ala-aminoacylated tmRNA acts like a tRNA, entering the A-site of stalled ribosomes, displacing the stalled mRNA. The ribosome then switches to translate the ORF on the tmRNA; the nascent peptide is terminated with the 'tag peptide' encoded by the tmRNA and targeted for degradation. The ribosome is freed to recommence translation, which seems to be the essential function of trans-translation.</text>
</comment>
<comment type="subcellular location">
    <subcellularLocation>
        <location evidence="1">Cytoplasm</location>
    </subcellularLocation>
    <text evidence="1">The tmRNA-SmpB complex associates with stalled 70S ribosomes.</text>
</comment>
<comment type="similarity">
    <text evidence="1">Belongs to the SmpB family.</text>
</comment>
<sequence length="160" mass="18269">MTKKKAHKPGSATIALNKRARHEYFIEEEFEAGLALQGWEVKSLRAGKANISDSYVLLRDGEAFLFGANITPMAVASTHVVCDPTRTRKLLLNQRELDSLYGRVNREGYTVVALSLYWKNAWCKVKIGVAKGKKQHDKRSDIKEREWQVDKARIMKNAHR</sequence>
<reference key="1">
    <citation type="journal article" date="2009" name="J. Bacteriol.">
        <title>Genomic sequencing reveals regulatory mutations and recombinational events in the widely used MC4100 lineage of Escherichia coli K-12.</title>
        <authorList>
            <person name="Ferenci T."/>
            <person name="Zhou Z."/>
            <person name="Betteridge T."/>
            <person name="Ren Y."/>
            <person name="Liu Y."/>
            <person name="Feng L."/>
            <person name="Reeves P.R."/>
            <person name="Wang L."/>
        </authorList>
    </citation>
    <scope>NUCLEOTIDE SEQUENCE [LARGE SCALE GENOMIC DNA]</scope>
    <source>
        <strain>K12 / MC4100 / BW2952</strain>
    </source>
</reference>
<feature type="chain" id="PRO_1000201932" description="SsrA-binding protein">
    <location>
        <begin position="1"/>
        <end position="160"/>
    </location>
</feature>
<organism>
    <name type="scientific">Escherichia coli (strain K12 / MC4100 / BW2952)</name>
    <dbReference type="NCBI Taxonomy" id="595496"/>
    <lineage>
        <taxon>Bacteria</taxon>
        <taxon>Pseudomonadati</taxon>
        <taxon>Pseudomonadota</taxon>
        <taxon>Gammaproteobacteria</taxon>
        <taxon>Enterobacterales</taxon>
        <taxon>Enterobacteriaceae</taxon>
        <taxon>Escherichia</taxon>
    </lineage>
</organism>
<proteinExistence type="inferred from homology"/>